<name>CMOA_CAMFF</name>
<accession>A0RPY4</accession>
<comment type="function">
    <text evidence="1">Catalyzes the conversion of S-adenosyl-L-methionine (SAM) to carboxy-S-adenosyl-L-methionine (Cx-SAM).</text>
</comment>
<comment type="catalytic activity">
    <reaction evidence="1">
        <text>prephenate + S-adenosyl-L-methionine = carboxy-S-adenosyl-L-methionine + 3-phenylpyruvate + H2O</text>
        <dbReference type="Rhea" id="RHEA:51692"/>
        <dbReference type="ChEBI" id="CHEBI:15377"/>
        <dbReference type="ChEBI" id="CHEBI:18005"/>
        <dbReference type="ChEBI" id="CHEBI:29934"/>
        <dbReference type="ChEBI" id="CHEBI:59789"/>
        <dbReference type="ChEBI" id="CHEBI:134278"/>
    </reaction>
</comment>
<comment type="subunit">
    <text evidence="1">Homodimer.</text>
</comment>
<comment type="similarity">
    <text evidence="1">Belongs to the class I-like SAM-binding methyltransferase superfamily. Cx-SAM synthase family.</text>
</comment>
<sequence length="234" mass="26962">MRDEVFKRPIKKQFEFDESVVSVFDDMVSRSVPYYCDVQALISLILSKNLSPNAKVFDLGCSTATTLLEIFKLRSDLSLNGVDSSEAMIKTARNRSLAYLANLNLYVSDILDFDFSGSDAVILNYTLQFIRPIKREEFIKKIYSNLKSGGIFIFSEKLVYEDKKLTLDMIEIYENYKHSQGYSKFEIAQKRQALENILIPYSENENKELCLNAGFKSVETIFKWANFATFIAFK</sequence>
<reference key="1">
    <citation type="submission" date="2006-11" db="EMBL/GenBank/DDBJ databases">
        <title>Sequence of Campylobacter fetus subsp. fetus 82-40.</title>
        <authorList>
            <person name="Fouts D.E."/>
            <person name="Nelson K.E."/>
        </authorList>
    </citation>
    <scope>NUCLEOTIDE SEQUENCE [LARGE SCALE GENOMIC DNA]</scope>
    <source>
        <strain>82-40</strain>
    </source>
</reference>
<dbReference type="EC" id="2.1.3.-" evidence="1"/>
<dbReference type="EMBL" id="CP000487">
    <property type="protein sequence ID" value="ABK82462.1"/>
    <property type="molecule type" value="Genomic_DNA"/>
</dbReference>
<dbReference type="RefSeq" id="WP_011732084.1">
    <property type="nucleotide sequence ID" value="NC_008599.1"/>
</dbReference>
<dbReference type="SMR" id="A0RPY4"/>
<dbReference type="GeneID" id="61064934"/>
<dbReference type="KEGG" id="cff:CFF8240_1109"/>
<dbReference type="PATRIC" id="fig|360106.6.peg.1082"/>
<dbReference type="eggNOG" id="COG2226">
    <property type="taxonomic scope" value="Bacteria"/>
</dbReference>
<dbReference type="HOGENOM" id="CLU_078475_0_0_7"/>
<dbReference type="Proteomes" id="UP000000760">
    <property type="component" value="Chromosome"/>
</dbReference>
<dbReference type="GO" id="GO:0016743">
    <property type="term" value="F:carboxyl- or carbamoyltransferase activity"/>
    <property type="evidence" value="ECO:0007669"/>
    <property type="project" value="UniProtKB-UniRule"/>
</dbReference>
<dbReference type="GO" id="GO:1904047">
    <property type="term" value="F:S-adenosyl-L-methionine binding"/>
    <property type="evidence" value="ECO:0007669"/>
    <property type="project" value="UniProtKB-UniRule"/>
</dbReference>
<dbReference type="GO" id="GO:0002098">
    <property type="term" value="P:tRNA wobble uridine modification"/>
    <property type="evidence" value="ECO:0007669"/>
    <property type="project" value="InterPro"/>
</dbReference>
<dbReference type="CDD" id="cd02440">
    <property type="entry name" value="AdoMet_MTases"/>
    <property type="match status" value="1"/>
</dbReference>
<dbReference type="Gene3D" id="3.40.50.150">
    <property type="entry name" value="Vaccinia Virus protein VP39"/>
    <property type="match status" value="1"/>
</dbReference>
<dbReference type="HAMAP" id="MF_01589">
    <property type="entry name" value="Cx_SAM_synthase"/>
    <property type="match status" value="1"/>
</dbReference>
<dbReference type="InterPro" id="IPR005271">
    <property type="entry name" value="CmoA"/>
</dbReference>
<dbReference type="InterPro" id="IPR025714">
    <property type="entry name" value="Methyltranfer_dom"/>
</dbReference>
<dbReference type="InterPro" id="IPR029063">
    <property type="entry name" value="SAM-dependent_MTases_sf"/>
</dbReference>
<dbReference type="NCBIfam" id="TIGR00740">
    <property type="entry name" value="carboxy-S-adenosyl-L-methionine synthase CmoA"/>
    <property type="match status" value="1"/>
</dbReference>
<dbReference type="PANTHER" id="PTHR43861:SF2">
    <property type="entry name" value="CARBOXY-S-ADENOSYL-L-METHIONINE SYNTHASE"/>
    <property type="match status" value="1"/>
</dbReference>
<dbReference type="PANTHER" id="PTHR43861">
    <property type="entry name" value="TRANS-ACONITATE 2-METHYLTRANSFERASE-RELATED"/>
    <property type="match status" value="1"/>
</dbReference>
<dbReference type="Pfam" id="PF13847">
    <property type="entry name" value="Methyltransf_31"/>
    <property type="match status" value="1"/>
</dbReference>
<dbReference type="PIRSF" id="PIRSF006325">
    <property type="entry name" value="MeTrfase_bac"/>
    <property type="match status" value="1"/>
</dbReference>
<dbReference type="SUPFAM" id="SSF53335">
    <property type="entry name" value="S-adenosyl-L-methionine-dependent methyltransferases"/>
    <property type="match status" value="1"/>
</dbReference>
<evidence type="ECO:0000255" key="1">
    <source>
        <dbReference type="HAMAP-Rule" id="MF_01589"/>
    </source>
</evidence>
<proteinExistence type="inferred from homology"/>
<keyword id="KW-0949">S-adenosyl-L-methionine</keyword>
<keyword id="KW-0808">Transferase</keyword>
<protein>
    <recommendedName>
        <fullName evidence="1">Carboxy-S-adenosyl-L-methionine synthase</fullName>
        <shortName evidence="1">Cx-SAM synthase</shortName>
        <ecNumber evidence="1">2.1.3.-</ecNumber>
    </recommendedName>
</protein>
<feature type="chain" id="PRO_0000314312" description="Carboxy-S-adenosyl-L-methionine synthase">
    <location>
        <begin position="1"/>
        <end position="234"/>
    </location>
</feature>
<feature type="binding site" evidence="1">
    <location>
        <position position="35"/>
    </location>
    <ligand>
        <name>S-adenosyl-L-methionine</name>
        <dbReference type="ChEBI" id="CHEBI:59789"/>
    </ligand>
</feature>
<feature type="binding site" evidence="1">
    <location>
        <begin position="60"/>
        <end position="62"/>
    </location>
    <ligand>
        <name>S-adenosyl-L-methionine</name>
        <dbReference type="ChEBI" id="CHEBI:59789"/>
    </ligand>
</feature>
<feature type="binding site" evidence="1">
    <location>
        <begin position="109"/>
        <end position="110"/>
    </location>
    <ligand>
        <name>S-adenosyl-L-methionine</name>
        <dbReference type="ChEBI" id="CHEBI:59789"/>
    </ligand>
</feature>
<feature type="binding site" evidence="1">
    <location>
        <position position="124"/>
    </location>
    <ligand>
        <name>S-adenosyl-L-methionine</name>
        <dbReference type="ChEBI" id="CHEBI:59789"/>
    </ligand>
</feature>
<feature type="binding site" evidence="1">
    <location>
        <position position="191"/>
    </location>
    <ligand>
        <name>S-adenosyl-L-methionine</name>
        <dbReference type="ChEBI" id="CHEBI:59789"/>
    </ligand>
</feature>
<gene>
    <name evidence="1" type="primary">cmoA</name>
    <name type="ordered locus">CFF8240_1109</name>
</gene>
<organism>
    <name type="scientific">Campylobacter fetus subsp. fetus (strain 82-40)</name>
    <dbReference type="NCBI Taxonomy" id="360106"/>
    <lineage>
        <taxon>Bacteria</taxon>
        <taxon>Pseudomonadati</taxon>
        <taxon>Campylobacterota</taxon>
        <taxon>Epsilonproteobacteria</taxon>
        <taxon>Campylobacterales</taxon>
        <taxon>Campylobacteraceae</taxon>
        <taxon>Campylobacter</taxon>
    </lineage>
</organism>